<name>HPRT_HAEIN</name>
<evidence type="ECO:0000250" key="1">
    <source>
        <dbReference type="UniProtKB" id="P0A9M2"/>
    </source>
</evidence>
<evidence type="ECO:0000250" key="2">
    <source>
        <dbReference type="UniProtKB" id="P9WHQ9"/>
    </source>
</evidence>
<evidence type="ECO:0000305" key="3"/>
<accession>P45078</accession>
<reference key="1">
    <citation type="journal article" date="1995" name="Science">
        <title>Whole-genome random sequencing and assembly of Haemophilus influenzae Rd.</title>
        <authorList>
            <person name="Fleischmann R.D."/>
            <person name="Adams M.D."/>
            <person name="White O."/>
            <person name="Clayton R.A."/>
            <person name="Kirkness E.F."/>
            <person name="Kerlavage A.R."/>
            <person name="Bult C.J."/>
            <person name="Tomb J.-F."/>
            <person name="Dougherty B.A."/>
            <person name="Merrick J.M."/>
            <person name="McKenney K."/>
            <person name="Sutton G.G."/>
            <person name="FitzHugh W."/>
            <person name="Fields C.A."/>
            <person name="Gocayne J.D."/>
            <person name="Scott J.D."/>
            <person name="Shirley R."/>
            <person name="Liu L.-I."/>
            <person name="Glodek A."/>
            <person name="Kelley J.M."/>
            <person name="Weidman J.F."/>
            <person name="Phillips C.A."/>
            <person name="Spriggs T."/>
            <person name="Hedblom E."/>
            <person name="Cotton M.D."/>
            <person name="Utterback T.R."/>
            <person name="Hanna M.C."/>
            <person name="Nguyen D.T."/>
            <person name="Saudek D.M."/>
            <person name="Brandon R.C."/>
            <person name="Fine L.D."/>
            <person name="Fritchman J.L."/>
            <person name="Fuhrmann J.L."/>
            <person name="Geoghagen N.S.M."/>
            <person name="Gnehm C.L."/>
            <person name="McDonald L.A."/>
            <person name="Small K.V."/>
            <person name="Fraser C.M."/>
            <person name="Smith H.O."/>
            <person name="Venter J.C."/>
        </authorList>
    </citation>
    <scope>NUCLEOTIDE SEQUENCE [LARGE SCALE GENOMIC DNA]</scope>
    <source>
        <strain>ATCC 51907 / DSM 11121 / KW20 / Rd</strain>
    </source>
</reference>
<proteinExistence type="inferred from homology"/>
<gene>
    <name type="primary">hpt</name>
    <name type="ordered locus">HI_1153</name>
</gene>
<comment type="function">
    <text evidence="1">Purine salvage pathway enzyme which catalyzes the transfer of the ribosyl-5-phosphate group from 5-phospho-alpha-D-ribose 1-diphosphate (PRPP) to the N9 position of hypoxanthine to yield IMP (inosine 5'-monophosphate). To a lesser extent, can also act on guanine leading to GMP, but shows a highly less efficient activity with xanthine.</text>
</comment>
<comment type="catalytic activity">
    <reaction evidence="1">
        <text>IMP + diphosphate = hypoxanthine + 5-phospho-alpha-D-ribose 1-diphosphate</text>
        <dbReference type="Rhea" id="RHEA:17973"/>
        <dbReference type="ChEBI" id="CHEBI:17368"/>
        <dbReference type="ChEBI" id="CHEBI:33019"/>
        <dbReference type="ChEBI" id="CHEBI:58017"/>
        <dbReference type="ChEBI" id="CHEBI:58053"/>
        <dbReference type="EC" id="2.4.2.8"/>
    </reaction>
    <physiologicalReaction direction="right-to-left" evidence="1">
        <dbReference type="Rhea" id="RHEA:17975"/>
    </physiologicalReaction>
</comment>
<comment type="catalytic activity">
    <reaction evidence="1">
        <text>GMP + diphosphate = guanine + 5-phospho-alpha-D-ribose 1-diphosphate</text>
        <dbReference type="Rhea" id="RHEA:25424"/>
        <dbReference type="ChEBI" id="CHEBI:16235"/>
        <dbReference type="ChEBI" id="CHEBI:33019"/>
        <dbReference type="ChEBI" id="CHEBI:58017"/>
        <dbReference type="ChEBI" id="CHEBI:58115"/>
        <dbReference type="EC" id="2.4.2.8"/>
    </reaction>
    <physiologicalReaction direction="right-to-left" evidence="1">
        <dbReference type="Rhea" id="RHEA:25426"/>
    </physiologicalReaction>
</comment>
<comment type="cofactor">
    <cofactor evidence="1">
        <name>Mg(2+)</name>
        <dbReference type="ChEBI" id="CHEBI:18420"/>
    </cofactor>
</comment>
<comment type="pathway">
    <text evidence="1">Purine metabolism; IMP biosynthesis via salvage pathway; IMP from hypoxanthine: step 1/1.</text>
</comment>
<comment type="subunit">
    <text evidence="1">Homotetramer.</text>
</comment>
<comment type="subcellular location">
    <subcellularLocation>
        <location>Cytoplasm</location>
    </subcellularLocation>
</comment>
<comment type="similarity">
    <text evidence="3">Belongs to the purine/pyrimidine phosphoribosyltransferase family.</text>
</comment>
<dbReference type="EC" id="2.4.2.8" evidence="1"/>
<dbReference type="EMBL" id="L42023">
    <property type="protein sequence ID" value="AAC22808.1"/>
    <property type="molecule type" value="Genomic_DNA"/>
</dbReference>
<dbReference type="PIR" id="D64168">
    <property type="entry name" value="D64168"/>
</dbReference>
<dbReference type="RefSeq" id="NP_439311.1">
    <property type="nucleotide sequence ID" value="NC_000907.1"/>
</dbReference>
<dbReference type="SMR" id="P45078"/>
<dbReference type="STRING" id="71421.HI_1153"/>
<dbReference type="EnsemblBacteria" id="AAC22808">
    <property type="protein sequence ID" value="AAC22808"/>
    <property type="gene ID" value="HI_1153"/>
</dbReference>
<dbReference type="KEGG" id="hin:HI_1153"/>
<dbReference type="PATRIC" id="fig|71421.8.peg.1203"/>
<dbReference type="eggNOG" id="COG0634">
    <property type="taxonomic scope" value="Bacteria"/>
</dbReference>
<dbReference type="HOGENOM" id="CLU_073615_0_0_6"/>
<dbReference type="OrthoDB" id="9802824at2"/>
<dbReference type="PhylomeDB" id="P45078"/>
<dbReference type="BioCyc" id="HINF71421:G1GJ1-1186-MONOMER"/>
<dbReference type="UniPathway" id="UPA00591">
    <property type="reaction ID" value="UER00648"/>
</dbReference>
<dbReference type="Proteomes" id="UP000000579">
    <property type="component" value="Chromosome"/>
</dbReference>
<dbReference type="GO" id="GO:0005829">
    <property type="term" value="C:cytosol"/>
    <property type="evidence" value="ECO:0000318"/>
    <property type="project" value="GO_Central"/>
</dbReference>
<dbReference type="GO" id="GO:0052657">
    <property type="term" value="F:guanine phosphoribosyltransferase activity"/>
    <property type="evidence" value="ECO:0007669"/>
    <property type="project" value="RHEA"/>
</dbReference>
<dbReference type="GO" id="GO:0004422">
    <property type="term" value="F:hypoxanthine phosphoribosyltransferase activity"/>
    <property type="evidence" value="ECO:0000318"/>
    <property type="project" value="GO_Central"/>
</dbReference>
<dbReference type="GO" id="GO:0000287">
    <property type="term" value="F:magnesium ion binding"/>
    <property type="evidence" value="ECO:0000318"/>
    <property type="project" value="GO_Central"/>
</dbReference>
<dbReference type="GO" id="GO:0000166">
    <property type="term" value="F:nucleotide binding"/>
    <property type="evidence" value="ECO:0007669"/>
    <property type="project" value="UniProtKB-KW"/>
</dbReference>
<dbReference type="GO" id="GO:0032263">
    <property type="term" value="P:GMP salvage"/>
    <property type="evidence" value="ECO:0000318"/>
    <property type="project" value="GO_Central"/>
</dbReference>
<dbReference type="GO" id="GO:0006178">
    <property type="term" value="P:guanine salvage"/>
    <property type="evidence" value="ECO:0000318"/>
    <property type="project" value="GO_Central"/>
</dbReference>
<dbReference type="GO" id="GO:0046100">
    <property type="term" value="P:hypoxanthine metabolic process"/>
    <property type="evidence" value="ECO:0000318"/>
    <property type="project" value="GO_Central"/>
</dbReference>
<dbReference type="GO" id="GO:0032264">
    <property type="term" value="P:IMP salvage"/>
    <property type="evidence" value="ECO:0000318"/>
    <property type="project" value="GO_Central"/>
</dbReference>
<dbReference type="GO" id="GO:0006166">
    <property type="term" value="P:purine ribonucleoside salvage"/>
    <property type="evidence" value="ECO:0007669"/>
    <property type="project" value="UniProtKB-KW"/>
</dbReference>
<dbReference type="CDD" id="cd06223">
    <property type="entry name" value="PRTases_typeI"/>
    <property type="match status" value="1"/>
</dbReference>
<dbReference type="FunFam" id="3.40.50.2020:FF:000006">
    <property type="entry name" value="Hypoxanthine phosphoribosyltransferase"/>
    <property type="match status" value="1"/>
</dbReference>
<dbReference type="Gene3D" id="3.40.50.2020">
    <property type="match status" value="1"/>
</dbReference>
<dbReference type="InterPro" id="IPR050408">
    <property type="entry name" value="HGPRT"/>
</dbReference>
<dbReference type="InterPro" id="IPR005904">
    <property type="entry name" value="Hxn_phspho_trans"/>
</dbReference>
<dbReference type="InterPro" id="IPR000836">
    <property type="entry name" value="PRibTrfase_dom"/>
</dbReference>
<dbReference type="InterPro" id="IPR029057">
    <property type="entry name" value="PRTase-like"/>
</dbReference>
<dbReference type="NCBIfam" id="TIGR01203">
    <property type="entry name" value="HGPRTase"/>
    <property type="match status" value="1"/>
</dbReference>
<dbReference type="PANTHER" id="PTHR43340:SF1">
    <property type="entry name" value="HYPOXANTHINE PHOSPHORIBOSYLTRANSFERASE"/>
    <property type="match status" value="1"/>
</dbReference>
<dbReference type="PANTHER" id="PTHR43340">
    <property type="entry name" value="HYPOXANTHINE-GUANINE PHOSPHORIBOSYLTRANSFERASE"/>
    <property type="match status" value="1"/>
</dbReference>
<dbReference type="Pfam" id="PF00156">
    <property type="entry name" value="Pribosyltran"/>
    <property type="match status" value="1"/>
</dbReference>
<dbReference type="SUPFAM" id="SSF53271">
    <property type="entry name" value="PRTase-like"/>
    <property type="match status" value="1"/>
</dbReference>
<dbReference type="PROSITE" id="PS00103">
    <property type="entry name" value="PUR_PYR_PR_TRANSFER"/>
    <property type="match status" value="1"/>
</dbReference>
<keyword id="KW-0963">Cytoplasm</keyword>
<keyword id="KW-0328">Glycosyltransferase</keyword>
<keyword id="KW-0460">Magnesium</keyword>
<keyword id="KW-0479">Metal-binding</keyword>
<keyword id="KW-0547">Nucleotide-binding</keyword>
<keyword id="KW-0660">Purine salvage</keyword>
<keyword id="KW-1185">Reference proteome</keyword>
<keyword id="KW-0808">Transferase</keyword>
<organism>
    <name type="scientific">Haemophilus influenzae (strain ATCC 51907 / DSM 11121 / KW20 / Rd)</name>
    <dbReference type="NCBI Taxonomy" id="71421"/>
    <lineage>
        <taxon>Bacteria</taxon>
        <taxon>Pseudomonadati</taxon>
        <taxon>Pseudomonadota</taxon>
        <taxon>Gammaproteobacteria</taxon>
        <taxon>Pasteurellales</taxon>
        <taxon>Pasteurellaceae</taxon>
        <taxon>Haemophilus</taxon>
    </lineage>
</organism>
<feature type="chain" id="PRO_0000139634" description="Hypoxanthine phosphoribosyltransferase">
    <location>
        <begin position="1"/>
        <end position="179"/>
    </location>
</feature>
<feature type="active site" description="Proton acceptor" evidence="1">
    <location>
        <position position="105"/>
    </location>
</feature>
<feature type="binding site" evidence="2">
    <location>
        <position position="45"/>
    </location>
    <ligand>
        <name>diphosphate</name>
        <dbReference type="ChEBI" id="CHEBI:33019"/>
    </ligand>
</feature>
<feature type="binding site" evidence="2">
    <location>
        <position position="46"/>
    </location>
    <ligand>
        <name>diphosphate</name>
        <dbReference type="ChEBI" id="CHEBI:33019"/>
    </ligand>
</feature>
<feature type="binding site" evidence="1">
    <location>
        <position position="101"/>
    </location>
    <ligand>
        <name>GMP</name>
        <dbReference type="ChEBI" id="CHEBI:58115"/>
    </ligand>
</feature>
<feature type="binding site" evidence="1">
    <location>
        <position position="101"/>
    </location>
    <ligand>
        <name>IMP</name>
        <dbReference type="ChEBI" id="CHEBI:58053"/>
    </ligand>
</feature>
<feature type="binding site" evidence="1">
    <location>
        <position position="101"/>
    </location>
    <ligand>
        <name>Mg(2+)</name>
        <dbReference type="ChEBI" id="CHEBI:18420"/>
    </ligand>
</feature>
<feature type="binding site" evidence="1">
    <location>
        <position position="102"/>
    </location>
    <ligand>
        <name>Mg(2+)</name>
        <dbReference type="ChEBI" id="CHEBI:18420"/>
    </ligand>
</feature>
<feature type="binding site" evidence="1">
    <location>
        <begin position="105"/>
        <end position="110"/>
    </location>
    <ligand>
        <name>GMP</name>
        <dbReference type="ChEBI" id="CHEBI:58115"/>
    </ligand>
</feature>
<feature type="binding site" evidence="1">
    <location>
        <begin position="105"/>
        <end position="110"/>
    </location>
    <ligand>
        <name>IMP</name>
        <dbReference type="ChEBI" id="CHEBI:58053"/>
    </ligand>
</feature>
<feature type="binding site" evidence="1">
    <location>
        <position position="133"/>
    </location>
    <ligand>
        <name>GMP</name>
        <dbReference type="ChEBI" id="CHEBI:58115"/>
    </ligand>
</feature>
<feature type="binding site" evidence="1">
    <location>
        <position position="133"/>
    </location>
    <ligand>
        <name>IMP</name>
        <dbReference type="ChEBI" id="CHEBI:58053"/>
    </ligand>
</feature>
<feature type="binding site" evidence="1">
    <location>
        <position position="161"/>
    </location>
    <ligand>
        <name>GMP</name>
        <dbReference type="ChEBI" id="CHEBI:58115"/>
    </ligand>
</feature>
<feature type="binding site" evidence="2">
    <location>
        <position position="167"/>
    </location>
    <ligand>
        <name>diphosphate</name>
        <dbReference type="ChEBI" id="CHEBI:33019"/>
    </ligand>
</feature>
<protein>
    <recommendedName>
        <fullName>Hypoxanthine phosphoribosyltransferase</fullName>
        <shortName>HPRT</shortName>
        <ecNumber evidence="1">2.4.2.8</ecNumber>
    </recommendedName>
</protein>
<sequence>MKKHHVDVLISENDVHARIAELGAQITKFYQEKQIDNLVVVGLLRGSFMFMADIVRQINLPVEIEFMTTSSYGTGMTTNHDVRITKDLDGDIKGKHVLIVEDIIDTGYTLEKVRDILNLREPASLTICTLLDKPSRREVEVPVEWVGFEIPDEFVVGYGIDYAQRHRNLGYIGKVVLEE</sequence>